<evidence type="ECO:0000250" key="1"/>
<evidence type="ECO:0000255" key="2">
    <source>
        <dbReference type="PROSITE-ProRule" id="PRU00108"/>
    </source>
</evidence>
<evidence type="ECO:0000256" key="3">
    <source>
        <dbReference type="SAM" id="MobiDB-lite"/>
    </source>
</evidence>
<evidence type="ECO:0000305" key="4"/>
<comment type="function">
    <text evidence="1">Regulates chordin (CHRD). May play a role in spatial programing within discrete embryonic fields or lineage compartments during organogenesis. In concert with NKX3-2, plays a role in defining the structural components of the middle ear; required for the development of the entire tympanic ring (By similarity). Probably involved in the regulatory networks that define neural crest cell fate specification and determine mesoderm cell lineages in mammals (By similarity).</text>
</comment>
<comment type="subcellular location">
    <subcellularLocation>
        <location evidence="2">Nucleus</location>
    </subcellularLocation>
</comment>
<comment type="similarity">
    <text evidence="4">Belongs to the paired homeobox family. Bicoid subfamily.</text>
</comment>
<protein>
    <recommendedName>
        <fullName>Homeobox protein goosecoid</fullName>
    </recommendedName>
</protein>
<dbReference type="EMBL" id="DQ976992">
    <property type="protein sequence ID" value="ABM47645.1"/>
    <property type="molecule type" value="Genomic_DNA"/>
</dbReference>
<dbReference type="BMRB" id="A1YFI3"/>
<dbReference type="SMR" id="A1YFI3"/>
<dbReference type="GO" id="GO:0005634">
    <property type="term" value="C:nucleus"/>
    <property type="evidence" value="ECO:0007669"/>
    <property type="project" value="UniProtKB-SubCell"/>
</dbReference>
<dbReference type="GO" id="GO:0000981">
    <property type="term" value="F:DNA-binding transcription factor activity, RNA polymerase II-specific"/>
    <property type="evidence" value="ECO:0007669"/>
    <property type="project" value="InterPro"/>
</dbReference>
<dbReference type="GO" id="GO:0000978">
    <property type="term" value="F:RNA polymerase II cis-regulatory region sequence-specific DNA binding"/>
    <property type="evidence" value="ECO:0007669"/>
    <property type="project" value="TreeGrafter"/>
</dbReference>
<dbReference type="GO" id="GO:0042474">
    <property type="term" value="P:middle ear morphogenesis"/>
    <property type="evidence" value="ECO:0000250"/>
    <property type="project" value="UniProtKB"/>
</dbReference>
<dbReference type="GO" id="GO:0014036">
    <property type="term" value="P:neural crest cell fate specification"/>
    <property type="evidence" value="ECO:0000250"/>
    <property type="project" value="UniProtKB"/>
</dbReference>
<dbReference type="CDD" id="cd00086">
    <property type="entry name" value="homeodomain"/>
    <property type="match status" value="1"/>
</dbReference>
<dbReference type="FunFam" id="1.10.10.60:FF:000210">
    <property type="entry name" value="homeobox protein goosecoid"/>
    <property type="match status" value="1"/>
</dbReference>
<dbReference type="Gene3D" id="1.10.10.60">
    <property type="entry name" value="Homeodomain-like"/>
    <property type="match status" value="1"/>
</dbReference>
<dbReference type="InterPro" id="IPR051440">
    <property type="entry name" value="Goosecoid-like_HB"/>
</dbReference>
<dbReference type="InterPro" id="IPR001356">
    <property type="entry name" value="HD"/>
</dbReference>
<dbReference type="InterPro" id="IPR017970">
    <property type="entry name" value="Homeobox_CS"/>
</dbReference>
<dbReference type="InterPro" id="IPR009057">
    <property type="entry name" value="Homeodomain-like_sf"/>
</dbReference>
<dbReference type="PANTHER" id="PTHR46643:SF2">
    <property type="entry name" value="HOMEOBOX PROTEIN GOOSECOID"/>
    <property type="match status" value="1"/>
</dbReference>
<dbReference type="PANTHER" id="PTHR46643">
    <property type="entry name" value="HOMEOBOX PROTEIN GOOSECOID-RELATED"/>
    <property type="match status" value="1"/>
</dbReference>
<dbReference type="Pfam" id="PF00046">
    <property type="entry name" value="Homeodomain"/>
    <property type="match status" value="1"/>
</dbReference>
<dbReference type="SMART" id="SM00389">
    <property type="entry name" value="HOX"/>
    <property type="match status" value="1"/>
</dbReference>
<dbReference type="SUPFAM" id="SSF46689">
    <property type="entry name" value="Homeodomain-like"/>
    <property type="match status" value="1"/>
</dbReference>
<dbReference type="PROSITE" id="PS00027">
    <property type="entry name" value="HOMEOBOX_1"/>
    <property type="match status" value="1"/>
</dbReference>
<dbReference type="PROSITE" id="PS50071">
    <property type="entry name" value="HOMEOBOX_2"/>
    <property type="match status" value="1"/>
</dbReference>
<name>GSC_SAGLB</name>
<gene>
    <name type="primary">GSC</name>
</gene>
<keyword id="KW-0217">Developmental protein</keyword>
<keyword id="KW-0238">DNA-binding</keyword>
<keyword id="KW-0371">Homeobox</keyword>
<keyword id="KW-0539">Nucleus</keyword>
<accession>A1YFI3</accession>
<feature type="chain" id="PRO_0000285446" description="Homeobox protein goosecoid">
    <location>
        <begin position="1"/>
        <end position="257"/>
    </location>
</feature>
<feature type="DNA-binding region" description="Homeobox" evidence="2">
    <location>
        <begin position="160"/>
        <end position="219"/>
    </location>
</feature>
<feature type="region of interest" description="Disordered" evidence="3">
    <location>
        <begin position="213"/>
        <end position="257"/>
    </location>
</feature>
<feature type="compositionally biased region" description="Basic and acidic residues" evidence="3">
    <location>
        <begin position="241"/>
        <end position="257"/>
    </location>
</feature>
<reference key="1">
    <citation type="submission" date="2006-08" db="EMBL/GenBank/DDBJ databases">
        <title>Positive selection in transcription factor genes on the human lineage.</title>
        <authorList>
            <person name="Nickel G.C."/>
            <person name="Tefft D.L."/>
            <person name="Trevarthen K."/>
            <person name="Funt J."/>
            <person name="Adams M.D."/>
        </authorList>
    </citation>
    <scope>NUCLEOTIDE SEQUENCE [GENOMIC DNA]</scope>
</reference>
<proteinExistence type="inferred from homology"/>
<organism>
    <name type="scientific">Saguinus labiatus</name>
    <name type="common">Red-chested mustached tamarin</name>
    <dbReference type="NCBI Taxonomy" id="78454"/>
    <lineage>
        <taxon>Eukaryota</taxon>
        <taxon>Metazoa</taxon>
        <taxon>Chordata</taxon>
        <taxon>Craniata</taxon>
        <taxon>Vertebrata</taxon>
        <taxon>Euteleostomi</taxon>
        <taxon>Mammalia</taxon>
        <taxon>Eutheria</taxon>
        <taxon>Euarchontoglires</taxon>
        <taxon>Primates</taxon>
        <taxon>Haplorrhini</taxon>
        <taxon>Platyrrhini</taxon>
        <taxon>Cebidae</taxon>
        <taxon>Callitrichinae</taxon>
        <taxon>Saguinus</taxon>
    </lineage>
</organism>
<sequence length="257" mass="28111">MPASMFSIDNILAARPRCKDSVLPVAPSAAAPVVFPALHGDSLYGASGGASSDYGAFYPRPVAPGGAGLQAAVGGSRLGYNNYFYGQLHVQAAPVGPACCGAVPPLGAQQCSCVPTPPGYEGPGSVLVSPVPHQMLPYMNVGTLSRTELQLLNQLHCRRKRRHRTIFTDEQLEALENLFQETKYPDVGTREQLARKVHLREEKVEVWFKNRRAKWRRQKRSSSEESENAEKWNKTSSSKASPEKREEEGKSDLDSDS</sequence>